<gene>
    <name evidence="5" type="primary">ATG18</name>
    <name type="ORF">KLMA_20474</name>
</gene>
<protein>
    <recommendedName>
        <fullName evidence="5">Autophagy-related protein 18</fullName>
    </recommendedName>
</protein>
<name>ATG18_KLUMD</name>
<evidence type="ECO:0000250" key="1">
    <source>
        <dbReference type="UniProtKB" id="P43601"/>
    </source>
</evidence>
<evidence type="ECO:0000255" key="2"/>
<evidence type="ECO:0000256" key="3">
    <source>
        <dbReference type="SAM" id="MobiDB-lite"/>
    </source>
</evidence>
<evidence type="ECO:0000269" key="4">
    <source>
    </source>
</evidence>
<evidence type="ECO:0000303" key="5">
    <source>
    </source>
</evidence>
<evidence type="ECO:0000305" key="6"/>
<proteinExistence type="inferred from homology"/>
<organism>
    <name type="scientific">Kluyveromyces marxianus (strain DMKU3-1042 / BCC 29191 / NBRC 104275)</name>
    <name type="common">Yeast</name>
    <name type="synonym">Candida kefyr</name>
    <dbReference type="NCBI Taxonomy" id="1003335"/>
    <lineage>
        <taxon>Eukaryota</taxon>
        <taxon>Fungi</taxon>
        <taxon>Dikarya</taxon>
        <taxon>Ascomycota</taxon>
        <taxon>Saccharomycotina</taxon>
        <taxon>Saccharomycetes</taxon>
        <taxon>Saccharomycetales</taxon>
        <taxon>Saccharomycetaceae</taxon>
        <taxon>Kluyveromyces</taxon>
    </lineage>
</organism>
<sequence length="513" mass="57117">MSDLPIINFINFNQNGTCISIGTSQGFKIFNCEPFGRFYQDDEGGCGIVEMLFSTSLLAVVGMGENPAMSPRRLRMLNTKRHSVICEVTFPTTILSIKMNKTRLAVLLQEQIYIYDISNMRLLHTIETSMNAQGLMSMSPNSENNYLVYPSPPKVINSEIKDHATTNNINIKKSDAAEDPLRKDHFAYDPSDHSHPQSTTESTSNNHNRTYSSGNNNNTNSNPNKIIKNGDVIVFNLQTLQPTMVIEAHKGEIAALKLSADGTLLATASEKGTIIRVFNVENGSKVYQFRRGTYSTKISSLSFSKDNQFLAVCSSSKTVHIFKLGEKIIDNTKPNELNSDDDMDDDLLPQFENGDDEEEVDEETLDEEATSLNSSHSNKEPIVDSSRSTVGRMIRKSSQRLSRKAAKTLGAYFPIKVSSILEPSRHFASLKISTTTNQPIKAIAAIDDPISLNTNEYPDLFDTSNQADHQNTDGLKMIPVRVLSSEGYMYKYILDPERGGDCILLEQYSLLSE</sequence>
<feature type="chain" id="PRO_0000443919" description="Autophagy-related protein 18">
    <location>
        <begin position="1"/>
        <end position="513"/>
    </location>
</feature>
<feature type="repeat" description="WD 1" evidence="2">
    <location>
        <begin position="2"/>
        <end position="40"/>
    </location>
</feature>
<feature type="repeat" description="WD 2" evidence="2">
    <location>
        <begin position="248"/>
        <end position="288"/>
    </location>
</feature>
<feature type="repeat" description="WD 3" evidence="2">
    <location>
        <begin position="293"/>
        <end position="332"/>
    </location>
</feature>
<feature type="region of interest" description="Disordered" evidence="3">
    <location>
        <begin position="167"/>
        <end position="225"/>
    </location>
</feature>
<feature type="region of interest" description="Necessary for proper localization to vacuole membrane" evidence="1">
    <location>
        <begin position="289"/>
        <end position="292"/>
    </location>
</feature>
<feature type="region of interest" description="Disordered" evidence="3">
    <location>
        <begin position="333"/>
        <end position="398"/>
    </location>
</feature>
<feature type="short sequence motif" description="L/FRRG motif" evidence="1">
    <location>
        <begin position="289"/>
        <end position="293"/>
    </location>
</feature>
<feature type="compositionally biased region" description="Basic and acidic residues" evidence="3">
    <location>
        <begin position="172"/>
        <end position="195"/>
    </location>
</feature>
<feature type="compositionally biased region" description="Low complexity" evidence="3">
    <location>
        <begin position="205"/>
        <end position="225"/>
    </location>
</feature>
<feature type="compositionally biased region" description="Acidic residues" evidence="3">
    <location>
        <begin position="338"/>
        <end position="369"/>
    </location>
</feature>
<dbReference type="EMBL" id="AP012214">
    <property type="protein sequence ID" value="BAO38932.1"/>
    <property type="molecule type" value="Genomic_DNA"/>
</dbReference>
<dbReference type="RefSeq" id="XP_022674797.1">
    <property type="nucleotide sequence ID" value="XM_022818095.1"/>
</dbReference>
<dbReference type="SMR" id="W0T5P4"/>
<dbReference type="GeneID" id="34714942"/>
<dbReference type="VEuPathDB" id="FungiDB:KLMA_20474"/>
<dbReference type="OrthoDB" id="1667587at2759"/>
<dbReference type="Proteomes" id="UP000065495">
    <property type="component" value="Chromosome 2"/>
</dbReference>
<dbReference type="GO" id="GO:0010008">
    <property type="term" value="C:endosome membrane"/>
    <property type="evidence" value="ECO:0007669"/>
    <property type="project" value="UniProtKB-SubCell"/>
</dbReference>
<dbReference type="GO" id="GO:0034045">
    <property type="term" value="C:phagophore assembly site membrane"/>
    <property type="evidence" value="ECO:0007669"/>
    <property type="project" value="UniProtKB-SubCell"/>
</dbReference>
<dbReference type="GO" id="GO:0005774">
    <property type="term" value="C:vacuolar membrane"/>
    <property type="evidence" value="ECO:0007669"/>
    <property type="project" value="UniProtKB-SubCell"/>
</dbReference>
<dbReference type="GO" id="GO:0006914">
    <property type="term" value="P:autophagy"/>
    <property type="evidence" value="ECO:0007669"/>
    <property type="project" value="UniProtKB-KW"/>
</dbReference>
<dbReference type="GO" id="GO:0015031">
    <property type="term" value="P:protein transport"/>
    <property type="evidence" value="ECO:0007669"/>
    <property type="project" value="UniProtKB-KW"/>
</dbReference>
<dbReference type="Gene3D" id="2.130.10.10">
    <property type="entry name" value="YVTN repeat-like/Quinoprotein amine dehydrogenase"/>
    <property type="match status" value="1"/>
</dbReference>
<dbReference type="InterPro" id="IPR048720">
    <property type="entry name" value="PROPPIN"/>
</dbReference>
<dbReference type="InterPro" id="IPR015943">
    <property type="entry name" value="WD40/YVTN_repeat-like_dom_sf"/>
</dbReference>
<dbReference type="InterPro" id="IPR036322">
    <property type="entry name" value="WD40_repeat_dom_sf"/>
</dbReference>
<dbReference type="InterPro" id="IPR001680">
    <property type="entry name" value="WD40_rpt"/>
</dbReference>
<dbReference type="PANTHER" id="PTHR11227">
    <property type="entry name" value="WD-REPEAT PROTEIN INTERACTING WITH PHOSPHOINOSIDES WIPI -RELATED"/>
    <property type="match status" value="1"/>
</dbReference>
<dbReference type="Pfam" id="PF21032">
    <property type="entry name" value="PROPPIN"/>
    <property type="match status" value="2"/>
</dbReference>
<dbReference type="SMART" id="SM00320">
    <property type="entry name" value="WD40"/>
    <property type="match status" value="2"/>
</dbReference>
<dbReference type="SUPFAM" id="SSF50978">
    <property type="entry name" value="WD40 repeat-like"/>
    <property type="match status" value="1"/>
</dbReference>
<accession>W0T5P4</accession>
<keyword id="KW-0072">Autophagy</keyword>
<keyword id="KW-0967">Endosome</keyword>
<keyword id="KW-0472">Membrane</keyword>
<keyword id="KW-0653">Protein transport</keyword>
<keyword id="KW-0677">Repeat</keyword>
<keyword id="KW-0813">Transport</keyword>
<keyword id="KW-0926">Vacuole</keyword>
<keyword id="KW-0853">WD repeat</keyword>
<comment type="function">
    <text evidence="1">Component of the PI(3,5)P2 regulatory complex that regulates both the synthesis and turnover of phosphatidylinositol 3,5-bisphosphate (PtdIns(3,5)P2) (By similarity). Plays an important role in osmotically-induced vacuole fragmentation (By similarity). Required for cytoplasm to vacuole transport (Cvt) vesicle formation, pexophagy and starvation-induced autophagy (By similarity). Involved in correct ATG9 trafficking to the pre-autophagosomal structure (By similarity). With ATG2, protects ATG8 from ATG4-mediated cleavage (By similarity).</text>
</comment>
<comment type="subunit">
    <text evidence="1">Component of the PI(3,5)P2 regulatory complex (By similarity). Interacts with ATG2 and ATG9 (By similarity). The ATG2-ATG18 complex is essential for autophagosome formation (By similarity).</text>
</comment>
<comment type="subcellular location">
    <subcellularLocation>
        <location evidence="1">Preautophagosomal structure membrane</location>
        <topology evidence="1">Peripheral membrane protein</topology>
    </subcellularLocation>
    <subcellularLocation>
        <location evidence="1">Vacuole membrane</location>
        <topology evidence="1">Peripheral membrane protein</topology>
    </subcellularLocation>
    <subcellularLocation>
        <location evidence="1">Endosome membrane</location>
        <topology evidence="1">Peripheral membrane protein</topology>
    </subcellularLocation>
</comment>
<comment type="domain">
    <text evidence="1">The 377 first amino acids might form a beta-propeller domain involved in specific binding to phosphatidylinositol 3,5-bisphosphate (PIP2), leading to the association of the protein to the membrane (By similarity). Association to the membrane can also occur through binding to phosphatidylinositol 3-monophosphate (PI3P) (By similarity).</text>
</comment>
<comment type="domain">
    <text evidence="1">The L/FRRG motif is essential for the cytoplasm to vacuole transport (Cvt) pathway, for the recruitment of ATG8 and ATG16 to the PAS in nutrient-rich medium, and for its recruitment to and dissociation from the PAS under starvation conditions (By similarity).</text>
</comment>
<comment type="disruption phenotype">
    <text evidence="4">Still forms preautophagosomal structures (PAS) in proximity to the vacuolar membrane (PubMed:26442587).</text>
</comment>
<comment type="miscellaneous">
    <text evidence="4">Kluyveromyces marxianus proteins are shorter in length and have a more ordered secondary structure than their S.cerevisiae counterparts, which might contribute to the superior thermotolerance and solubility (PubMed:26442587). K.marxianus could be therefore useful as a new model organism for further elucidation of the molecular details of autophagy (PubMed:26442587).</text>
</comment>
<comment type="similarity">
    <text evidence="6">Belongs to the WD repeat PROPPIN family.</text>
</comment>
<reference key="1">
    <citation type="journal article" date="2015" name="Biotechnol. Biofuels">
        <title>Genetic basis of the highly efficient yeast Kluyveromyces marxianus: complete genome sequence and transcriptome analyses.</title>
        <authorList>
            <person name="Lertwattanasakul N."/>
            <person name="Kosaka T."/>
            <person name="Hosoyama A."/>
            <person name="Suzuki Y."/>
            <person name="Rodrussamee N."/>
            <person name="Matsutani M."/>
            <person name="Murata M."/>
            <person name="Fujimoto N."/>
            <person name="Suprayogi X."/>
            <person name="Tsuchikane K."/>
            <person name="Limtong S."/>
            <person name="Fujita N."/>
            <person name="Yamada M."/>
        </authorList>
    </citation>
    <scope>NUCLEOTIDE SEQUENCE [LARGE SCALE GENOMIC DNA]</scope>
    <source>
        <strain>DMKU3-1042 / BCC 29191 / NBRC 104275</strain>
    </source>
</reference>
<reference key="2">
    <citation type="journal article" date="2015" name="J. Biol. Chem.">
        <title>The thermotolerant yeast Kluyveromyces marxianus is a useful organism for structural and biochemical studies of autophagy.</title>
        <authorList>
            <person name="Yamamoto H."/>
            <person name="Shima T."/>
            <person name="Yamaguchi M."/>
            <person name="Mochizuki Y."/>
            <person name="Hoshida H."/>
            <person name="Kakuta S."/>
            <person name="Kondo-Kakuta C."/>
            <person name="Noda N.N."/>
            <person name="Inagaki F."/>
            <person name="Itoh T."/>
            <person name="Akada R."/>
            <person name="Ohsumi Y."/>
        </authorList>
    </citation>
    <scope>IDENTIFICATION</scope>
    <scope>DISRUPTION PHENOTYPE</scope>
</reference>